<feature type="chain" id="PRO_0000403189" description="RNA-directed RNA polymerase VP1">
    <location>
        <begin position="1"/>
        <end position="1435"/>
    </location>
</feature>
<feature type="domain" description="RdRp catalytic" evidence="2">
    <location>
        <begin position="604"/>
        <end position="880"/>
    </location>
</feature>
<organismHost>
    <name type="scientific">Callospermophilus lateralis</name>
    <name type="common">Golden-mantled ground squirrel</name>
    <name type="synonym">Spermophilus lateralis</name>
    <dbReference type="NCBI Taxonomy" id="76772"/>
</organismHost>
<organismHost>
    <name type="scientific">Dermacentor andersoni</name>
    <name type="common">Rocky mountain wood tick</name>
    <dbReference type="NCBI Taxonomy" id="34620"/>
</organismHost>
<organismHost>
    <name type="scientific">Erethizon dorsatum</name>
    <name type="common">North American porcupine</name>
    <name type="synonym">Hystrix dorsata</name>
    <dbReference type="NCBI Taxonomy" id="34844"/>
</organismHost>
<organismHost>
    <name type="scientific">Homo sapiens</name>
    <name type="common">Human</name>
    <dbReference type="NCBI Taxonomy" id="9606"/>
</organismHost>
<organismHost>
    <name type="scientific">Neotoma cinerea</name>
    <name type="common">Bushy-tailed woodrat</name>
    <name type="synonym">Mus cinereus</name>
    <dbReference type="NCBI Taxonomy" id="105147"/>
</organismHost>
<organismHost>
    <name type="scientific">Peromyscus maniculatus</name>
    <name type="common">North American deer mouse</name>
    <dbReference type="NCBI Taxonomy" id="10042"/>
</organismHost>
<evidence type="ECO:0000250" key="1"/>
<evidence type="ECO:0000255" key="2">
    <source>
        <dbReference type="PROSITE-ProRule" id="PRU00539"/>
    </source>
</evidence>
<evidence type="ECO:0000305" key="3"/>
<proteinExistence type="inferred from homology"/>
<accession>Q9DSQ0</accession>
<organism>
    <name type="scientific">Colorado tick fever virus (strain USA/Florio N-7180)</name>
    <name type="common">CTFV</name>
    <dbReference type="NCBI Taxonomy" id="648168"/>
    <lineage>
        <taxon>Viruses</taxon>
        <taxon>Riboviria</taxon>
        <taxon>Orthornavirae</taxon>
        <taxon>Duplornaviricota</taxon>
        <taxon>Resentoviricetes</taxon>
        <taxon>Reovirales</taxon>
        <taxon>Spinareoviridae</taxon>
        <taxon>Coltivirus</taxon>
        <taxon>Colorado tick fever coltivirus</taxon>
    </lineage>
</organism>
<sequence>MARRPSKEWRERFNALSLKCKQLIHSSITNDFTTTDKAQQSTFYSSSGLMDVRKRLSISESLEVFGSLIDNWDLVQLVGTRAEPFVLNNPASYLLVNQLLALAGQAHSAASMVFLNSLMYDDALDHVNLWPYEVERPIPQITREVLSPPPFSVNSYYLQRDIDVIKAKTKAAVYIENYRAGDVFAKKRSISKGATFEERVYHGAVTMLQRMVKLRGSTIQECFVIAISSYRCSDCVRRMMASESGTGAIHEMDHICIMRSNALRWLQAAFSDFPEFPFLMTRDGVKFASNCGAVSTQVPLLFFQTLEMMVLTMDGTLSSTWEGWVCCEWYDRARVGLFSEMFDRRGVVAHLREAILRQSRLLRYQSRGLHLASVSNFPKRSVSADGLDDRIIEGLQKFNSKVCSFIQSWIFQIDLVDEPARWLAVMIKTFASALLYVMGATSLSLEQSAQGTLGIGDPISFPRQEILLEGEWIAVDWYYPDPDLADMREMGMALVDNASPEYTDWEYGFFNVQTTNSAGNVKEVIEERRKQLVAEFGDQGKLLAKVENTRILDAVQKITSTFQNPQDFCDSADNVRKAGERHQVGRRPRVIQMVGTEGQLSAFVLHNVLRPAYKATRFTTSGKNSGDIRDMNIVLEISGELGYKSSLDVKGMDSSTKPFQTNLSLSCVFHRLRGEVLGYPAFFLGSTSSSKDNYVVTRTRYRDEHGGILVEEEYKLTYPQYVLLLGAIHWTSPTRFTDGYFQEFVMTSRTVFRSGLLNTADQHTFLGVIMYALLEKRLRQRWYGKHGKEMREKIGQRREALEEYEEHVKLLGSVLGDDQVAGAFCQGIVDEEVILRITRDLCDETKFLMERLGYECEPEISEYSAEFLKQKGVLGAPELFPERLLLFSSERGDMAGSLPLDRVKIMLSMTDEKIGRARCPLPYASLMLFTSWVSGTASFSIGEEGRLLYRTGRNWKKVFASKRAASVAWKDQFTSDGVFDVRWNGFGMFYKEWASANTKTILLGCGLLWACSDALGVPFPPLVQKDEILCPGTSVYTIPSNAMTHYLLWATRRDRADAERMWRAVRDDLLRGDNDPLESYIEYVDKMFAEVGVIDIPFSALHIYGVGMGFVAGVMPVPMEVWYDFGLFGKVGGFGTWIAELVFKDIRIDREKYDLPRLSMWKNAANHSLPSEVRRASLYARDTLHEKYGMVVPSAVLVAERPGCKIDQALFEVRRVGMEDVRELEKVLDELTRLNHLERKFTKRLAMGLFIVEKLTERRTGYGPAIASNGWGHIAAPYSFQARLLECLAFPMYNGFNYEAVRERVFVDGKLPGDPKLYLKIGRQALSYSEEAYNLVSASMGLSSRQAADMRDMILEGINGLEEARFALNPRKTFLFDVSRRKGAGFFQTPHRRKTNQAYCEMMGMALLLMEPWKFSSGDWRMSFSHRLRAILGRR</sequence>
<protein>
    <recommendedName>
        <fullName>RNA-directed RNA polymerase VP1</fullName>
        <ecNumber>2.7.7.48</ecNumber>
    </recommendedName>
</protein>
<dbReference type="EC" id="2.7.7.48"/>
<dbReference type="EMBL" id="AF133428">
    <property type="protein sequence ID" value="AAG34362.1"/>
    <property type="molecule type" value="Genomic_RNA"/>
</dbReference>
<dbReference type="RefSeq" id="NP_690891.1">
    <property type="nucleotide sequence ID" value="NC_004181.1"/>
</dbReference>
<dbReference type="GeneID" id="993309"/>
<dbReference type="KEGG" id="vg:993309"/>
<dbReference type="Proteomes" id="UP000001675">
    <property type="component" value="Genome"/>
</dbReference>
<dbReference type="GO" id="GO:0016787">
    <property type="term" value="F:hydrolase activity"/>
    <property type="evidence" value="ECO:0007669"/>
    <property type="project" value="UniProtKB-KW"/>
</dbReference>
<dbReference type="GO" id="GO:0000166">
    <property type="term" value="F:nucleotide binding"/>
    <property type="evidence" value="ECO:0007669"/>
    <property type="project" value="UniProtKB-KW"/>
</dbReference>
<dbReference type="GO" id="GO:0003723">
    <property type="term" value="F:RNA binding"/>
    <property type="evidence" value="ECO:0007669"/>
    <property type="project" value="InterPro"/>
</dbReference>
<dbReference type="GO" id="GO:0003968">
    <property type="term" value="F:RNA-directed RNA polymerase activity"/>
    <property type="evidence" value="ECO:0007669"/>
    <property type="project" value="UniProtKB-KW"/>
</dbReference>
<dbReference type="GO" id="GO:0019079">
    <property type="term" value="P:viral genome replication"/>
    <property type="evidence" value="ECO:0007669"/>
    <property type="project" value="InterPro"/>
</dbReference>
<dbReference type="Gene3D" id="3.90.1850.10">
    <property type="entry name" value="RNA-directed RNA polymerase lambda-3"/>
    <property type="match status" value="1"/>
</dbReference>
<dbReference type="InterPro" id="IPR007097">
    <property type="entry name" value="RNA-dir_pol_reovirus"/>
</dbReference>
<dbReference type="Pfam" id="PF22212">
    <property type="entry name" value="CPV_RdRP_pol_dom"/>
    <property type="match status" value="1"/>
</dbReference>
<dbReference type="PROSITE" id="PS50523">
    <property type="entry name" value="RDRP_DSRNA_REO"/>
    <property type="match status" value="1"/>
</dbReference>
<name>RDRP_CTFVL</name>
<comment type="function">
    <text evidence="2">RNA-directed RNA polymerase involved in transcription and genome replication. Following infection, catalyzes the synthesis of fully conservative plus strands. After core assembly, which consists in recruitment of one capped plus-strand for each genomic segments and polymerase complexes, the polymerase switches mode and catalyzes the synthesis of complementary minus-strands (By similarity).</text>
</comment>
<comment type="catalytic activity">
    <reaction evidence="2">
        <text>RNA(n) + a ribonucleoside 5'-triphosphate = RNA(n+1) + diphosphate</text>
        <dbReference type="Rhea" id="RHEA:21248"/>
        <dbReference type="Rhea" id="RHEA-COMP:14527"/>
        <dbReference type="Rhea" id="RHEA-COMP:17342"/>
        <dbReference type="ChEBI" id="CHEBI:33019"/>
        <dbReference type="ChEBI" id="CHEBI:61557"/>
        <dbReference type="ChEBI" id="CHEBI:140395"/>
        <dbReference type="EC" id="2.7.7.48"/>
    </reaction>
</comment>
<comment type="subunit">
    <text evidence="1">Interacts with VP4.</text>
</comment>
<comment type="similarity">
    <text evidence="3">Belongs to the reoviridae RNA-directed RNA polymerase family.</text>
</comment>
<keyword id="KW-0378">Hydrolase</keyword>
<keyword id="KW-0547">Nucleotide-binding</keyword>
<keyword id="KW-0548">Nucleotidyltransferase</keyword>
<keyword id="KW-1185">Reference proteome</keyword>
<keyword id="KW-0696">RNA-directed RNA polymerase</keyword>
<keyword id="KW-0808">Transferase</keyword>
<keyword id="KW-0693">Viral RNA replication</keyword>
<reference key="1">
    <citation type="submission" date="1999-03" db="EMBL/GenBank/DDBJ databases">
        <authorList>
            <person name="Attoui H."/>
            <person name="Billoir F."/>
            <person name="De Micco P."/>
            <person name="De Lamballerie X."/>
        </authorList>
    </citation>
    <scope>NUCLEOTIDE SEQUENCE [GENOMIC RNA]</scope>
</reference>